<accession>Q8VDM6</accession>
<accession>Q3U201</accession>
<accession>Q3UPB0</accession>
<accession>Q6AZA7</accession>
<accession>Q8BY45</accession>
<accession>Q8K365</accession>
<comment type="function">
    <text evidence="1">Acts as a basic transcriptional regulator. Represses basic transcription driven by several virus and cellular promoters. When associated with BRD7, activates transcription of glucocorticoid-responsive promoter in the absence of ligand-stimulation. Also plays a role in mRNA processing and transport. Binds avidly to poly(G) and poly(C) RNA homopolymers in vitro (By similarity).</text>
</comment>
<comment type="subunit">
    <text evidence="1">Interacts with BRD7, PRMT2, TP53 and NXF1. Associates with histones and BRD7 (By similarity).</text>
</comment>
<comment type="subcellular location">
    <subcellularLocation>
        <location evidence="1">Nucleus</location>
    </subcellularLocation>
</comment>
<comment type="alternative products">
    <event type="alternative splicing"/>
    <isoform>
        <id>Q8VDM6-1</id>
        <name>1</name>
        <sequence type="displayed"/>
    </isoform>
    <isoform>
        <id>Q8VDM6-2</id>
        <name>2</name>
        <sequence type="described" ref="VSP_017553"/>
    </isoform>
    <isoform>
        <id>Q8VDM6-3</id>
        <name>3</name>
        <sequence type="described" ref="VSP_017554 VSP_017555"/>
    </isoform>
</comment>
<comment type="domain">
    <text evidence="1">The RGG-box domain is methylated.</text>
</comment>
<comment type="PTM">
    <text evidence="1">Methylated.</text>
</comment>
<comment type="sequence caution" evidence="8">
    <conflict type="erroneous initiation">
        <sequence resource="EMBL-CDS" id="AAH27844"/>
    </conflict>
    <text>Extended N-terminus.</text>
</comment>
<proteinExistence type="evidence at protein level"/>
<name>HNRL1_MOUSE</name>
<sequence length="859" mass="96002">MDVRRLKVNELREELQRRGLDTRGLKAELAERLLAALEAEEPEDERELEADDDPGLPGHNNEEVETEGGSELEGTAQPPPPGLQPHPEPGGYSGPDGHYVMDNITRQNQFYETPVIKQENESSYDRRPLDMEPQQQVYHPELKTEMKQEAPPSFLPPEASQLKTDRPQFQNRKRPFEENRGRGYFEHREDRRGRSPQPPAEEDEDDFDDTLVAIDTYNCDLHFKVARDRSSGYPLTIEGFAYLWSGARASYGVRRGRVCFEMKINEEISVKHLPSTEPDPHVVRIGWSLDSCSTQLGEEPFSYGYGGTGKKSTNSRFENYGDKFAENDVIGCFADFECGNDVELSFTKNGKWMGIAFRIQKEALGGQALYPHVLVKNCAVEFNFGQRAEPYCSVLPGFTFIQHLPLSERIRGTIGPKSKAECEILMMVGLPAAGKTTWAIKHAASNPSKKYNILGTNAIMDKMRVMGLRRQRNYAGRWDVLIQQATQCLNRLIQIAARKKRNYILDQTNVYGSAQRRKMRPFEGFQRKAIVICPTDEDLKDRTVKRTDEEGKDVPDHAVLEMKANFTLPDVGDFLDEVLFIELQREEADKLVRQYNEEGRKAGPPPEKRFDSRGGGFRGRGGGGGFQRYDNRGPPGGNRGGFQNRGGGGGSGGGGGNYRGGFNRSGGGGYNQNRWGNNNRDNNNSNNRGNYNRAPQQQPPPQQPPPPQPPPQQPPPPPSYSPARNPPGASSYNKNSNIPGSSANTSTPTVSSYTPPQPSYSQPPYNQGGYTQGYTAPPPPPPPPPAYNYGSYGPYNPAPYTPPPPPTAQTYPQPSYNQYQQYAQQWSQYYQNQSQWPPYYGNYDYGGYSGSTQGGTSTQ</sequence>
<dbReference type="EMBL" id="AK042090">
    <property type="protein sequence ID" value="BAC31161.1"/>
    <property type="molecule type" value="mRNA"/>
</dbReference>
<dbReference type="EMBL" id="AK143666">
    <property type="protein sequence ID" value="BAE25486.1"/>
    <property type="molecule type" value="mRNA"/>
</dbReference>
<dbReference type="EMBL" id="AK155604">
    <property type="protein sequence ID" value="BAE33342.1"/>
    <property type="molecule type" value="mRNA"/>
</dbReference>
<dbReference type="EMBL" id="BC021506">
    <property type="protein sequence ID" value="AAH21506.1"/>
    <property type="molecule type" value="mRNA"/>
</dbReference>
<dbReference type="EMBL" id="BC027844">
    <property type="protein sequence ID" value="AAH27844.1"/>
    <property type="status" value="ALT_INIT"/>
    <property type="molecule type" value="mRNA"/>
</dbReference>
<dbReference type="EMBL" id="BC078642">
    <property type="protein sequence ID" value="AAH78642.1"/>
    <property type="molecule type" value="mRNA"/>
</dbReference>
<dbReference type="CCDS" id="CCDS20995.1">
    <molecule id="Q8VDM6-1"/>
</dbReference>
<dbReference type="CCDS" id="CCDS39841.1">
    <molecule id="Q8VDM6-3"/>
</dbReference>
<dbReference type="CCDS" id="CCDS90188.1">
    <molecule id="Q8VDM6-2"/>
</dbReference>
<dbReference type="RefSeq" id="NP_001347718.1">
    <molecule id="Q8VDM6-2"/>
    <property type="nucleotide sequence ID" value="NM_001360789.1"/>
</dbReference>
<dbReference type="RefSeq" id="NP_659171.1">
    <molecule id="Q8VDM6-1"/>
    <property type="nucleotide sequence ID" value="NM_144922.3"/>
</dbReference>
<dbReference type="RefSeq" id="NP_835190.1">
    <molecule id="Q8VDM6-3"/>
    <property type="nucleotide sequence ID" value="NM_178089.3"/>
</dbReference>
<dbReference type="RefSeq" id="XP_006539918.1">
    <property type="nucleotide sequence ID" value="XM_006539855.3"/>
</dbReference>
<dbReference type="RefSeq" id="XP_006539919.1">
    <molecule id="Q8VDM6-2"/>
    <property type="nucleotide sequence ID" value="XM_006539856.4"/>
</dbReference>
<dbReference type="RefSeq" id="XP_036008842.1">
    <molecule id="Q8VDM6-2"/>
    <property type="nucleotide sequence ID" value="XM_036152949.1"/>
</dbReference>
<dbReference type="SMR" id="Q8VDM6"/>
<dbReference type="BioGRID" id="231344">
    <property type="interactions" value="20"/>
</dbReference>
<dbReference type="FunCoup" id="Q8VDM6">
    <property type="interactions" value="4546"/>
</dbReference>
<dbReference type="IntAct" id="Q8VDM6">
    <property type="interactions" value="2"/>
</dbReference>
<dbReference type="STRING" id="10090.ENSMUSP00000146263"/>
<dbReference type="GlyGen" id="Q8VDM6">
    <property type="glycosylation" value="3 sites, 1 N-linked glycan (1 site), 1 O-linked glycan (1 site)"/>
</dbReference>
<dbReference type="iPTMnet" id="Q8VDM6"/>
<dbReference type="PhosphoSitePlus" id="Q8VDM6"/>
<dbReference type="SwissPalm" id="Q8VDM6"/>
<dbReference type="jPOST" id="Q8VDM6"/>
<dbReference type="PaxDb" id="10090-ENSMUSP00000037268"/>
<dbReference type="PeptideAtlas" id="Q8VDM6"/>
<dbReference type="ProteomicsDB" id="273304">
    <molecule id="Q8VDM6-1"/>
</dbReference>
<dbReference type="ProteomicsDB" id="273305">
    <molecule id="Q8VDM6-2"/>
</dbReference>
<dbReference type="ProteomicsDB" id="273306">
    <molecule id="Q8VDM6-3"/>
</dbReference>
<dbReference type="Pumba" id="Q8VDM6"/>
<dbReference type="Antibodypedia" id="17170">
    <property type="antibodies" value="182 antibodies from 26 providers"/>
</dbReference>
<dbReference type="DNASU" id="232989"/>
<dbReference type="Ensembl" id="ENSMUST00000043765.14">
    <molecule id="Q8VDM6-2"/>
    <property type="protein sequence ID" value="ENSMUSP00000037268.9"/>
    <property type="gene ID" value="ENSMUSG00000040725.14"/>
</dbReference>
<dbReference type="Ensembl" id="ENSMUST00000108401.3">
    <molecule id="Q8VDM6-3"/>
    <property type="protein sequence ID" value="ENSMUSP00000104038.2"/>
    <property type="gene ID" value="ENSMUSG00000040725.14"/>
</dbReference>
<dbReference type="Ensembl" id="ENSMUST00000206832.2">
    <molecule id="Q8VDM6-1"/>
    <property type="protein sequence ID" value="ENSMUSP00000146263.2"/>
    <property type="gene ID" value="ENSMUSG00000040725.14"/>
</dbReference>
<dbReference type="GeneID" id="232989"/>
<dbReference type="KEGG" id="mmu:232989"/>
<dbReference type="UCSC" id="uc009ftu.1">
    <molecule id="Q8VDM6-1"/>
    <property type="organism name" value="mouse"/>
</dbReference>
<dbReference type="UCSC" id="uc009ftw.1">
    <molecule id="Q8VDM6-3"/>
    <property type="organism name" value="mouse"/>
</dbReference>
<dbReference type="AGR" id="MGI:2443517"/>
<dbReference type="CTD" id="11100"/>
<dbReference type="MGI" id="MGI:2443517">
    <property type="gene designation" value="Hnrnpul1"/>
</dbReference>
<dbReference type="VEuPathDB" id="HostDB:ENSMUSG00000040725"/>
<dbReference type="eggNOG" id="KOG2242">
    <property type="taxonomic scope" value="Eukaryota"/>
</dbReference>
<dbReference type="GeneTree" id="ENSGT00940000157823"/>
<dbReference type="HOGENOM" id="CLU_012140_0_1_1"/>
<dbReference type="InParanoid" id="Q8VDM6"/>
<dbReference type="OMA" id="FFEMAPR"/>
<dbReference type="OrthoDB" id="445357at2759"/>
<dbReference type="PhylomeDB" id="Q8VDM6"/>
<dbReference type="TreeFam" id="TF317301"/>
<dbReference type="BioGRID-ORCS" id="232989">
    <property type="hits" value="1 hit in 78 CRISPR screens"/>
</dbReference>
<dbReference type="ChiTaRS" id="Hnrnpul1">
    <property type="organism name" value="mouse"/>
</dbReference>
<dbReference type="PRO" id="PR:Q8VDM6"/>
<dbReference type="Proteomes" id="UP000000589">
    <property type="component" value="Chromosome 7"/>
</dbReference>
<dbReference type="RNAct" id="Q8VDM6">
    <property type="molecule type" value="protein"/>
</dbReference>
<dbReference type="Bgee" id="ENSMUSG00000040725">
    <property type="expression patterns" value="Expressed in humerus cartilage element and 249 other cell types or tissues"/>
</dbReference>
<dbReference type="GO" id="GO:0005654">
    <property type="term" value="C:nucleoplasm"/>
    <property type="evidence" value="ECO:0007669"/>
    <property type="project" value="Ensembl"/>
</dbReference>
<dbReference type="GO" id="GO:0005634">
    <property type="term" value="C:nucleus"/>
    <property type="evidence" value="ECO:0000250"/>
    <property type="project" value="UniProtKB"/>
</dbReference>
<dbReference type="GO" id="GO:1990904">
    <property type="term" value="C:ribonucleoprotein complex"/>
    <property type="evidence" value="ECO:0007669"/>
    <property type="project" value="UniProtKB-KW"/>
</dbReference>
<dbReference type="GO" id="GO:0045202">
    <property type="term" value="C:synapse"/>
    <property type="evidence" value="ECO:0000314"/>
    <property type="project" value="SynGO"/>
</dbReference>
<dbReference type="GO" id="GO:0019899">
    <property type="term" value="F:enzyme binding"/>
    <property type="evidence" value="ECO:0007669"/>
    <property type="project" value="Ensembl"/>
</dbReference>
<dbReference type="GO" id="GO:0003723">
    <property type="term" value="F:RNA binding"/>
    <property type="evidence" value="ECO:0007669"/>
    <property type="project" value="UniProtKB-KW"/>
</dbReference>
<dbReference type="CDD" id="cd12884">
    <property type="entry name" value="SPRY_hnRNP"/>
    <property type="match status" value="1"/>
</dbReference>
<dbReference type="FunFam" id="2.60.120.920:FF:000006">
    <property type="entry name" value="heterogeneous nuclear ribonucleoprotein U isoform X1"/>
    <property type="match status" value="1"/>
</dbReference>
<dbReference type="FunFam" id="3.40.50.300:FF:000355">
    <property type="entry name" value="Heterogeneous nuclear ribonucleoprotein U-like 1, isoform CRA_a"/>
    <property type="match status" value="1"/>
</dbReference>
<dbReference type="Gene3D" id="2.60.120.920">
    <property type="match status" value="1"/>
</dbReference>
<dbReference type="Gene3D" id="3.40.50.300">
    <property type="entry name" value="P-loop containing nucleotide triphosphate hydrolases"/>
    <property type="match status" value="1"/>
</dbReference>
<dbReference type="Gene3D" id="1.10.720.30">
    <property type="entry name" value="SAP domain"/>
    <property type="match status" value="1"/>
</dbReference>
<dbReference type="InterPro" id="IPR001870">
    <property type="entry name" value="B30.2/SPRY"/>
</dbReference>
<dbReference type="InterPro" id="IPR043136">
    <property type="entry name" value="B30.2/SPRY_sf"/>
</dbReference>
<dbReference type="InterPro" id="IPR013320">
    <property type="entry name" value="ConA-like_dom_sf"/>
</dbReference>
<dbReference type="InterPro" id="IPR027417">
    <property type="entry name" value="P-loop_NTPase"/>
</dbReference>
<dbReference type="InterPro" id="IPR003034">
    <property type="entry name" value="SAP_dom"/>
</dbReference>
<dbReference type="InterPro" id="IPR036361">
    <property type="entry name" value="SAP_dom_sf"/>
</dbReference>
<dbReference type="InterPro" id="IPR003877">
    <property type="entry name" value="SPRY_dom"/>
</dbReference>
<dbReference type="InterPro" id="IPR035778">
    <property type="entry name" value="SPRY_hnRNP_U"/>
</dbReference>
<dbReference type="PANTHER" id="PTHR12381">
    <property type="entry name" value="HETEROGENEOUS NUCLEAR RIBONUCLEOPROTEIN U FAMILY MEMBER"/>
    <property type="match status" value="1"/>
</dbReference>
<dbReference type="PANTHER" id="PTHR12381:SF41">
    <property type="entry name" value="HETEROGENEOUS NUCLEAR RIBONUCLEOPROTEIN U-LIKE PROTEIN 1"/>
    <property type="match status" value="1"/>
</dbReference>
<dbReference type="Pfam" id="PF13671">
    <property type="entry name" value="AAA_33"/>
    <property type="match status" value="1"/>
</dbReference>
<dbReference type="Pfam" id="PF02037">
    <property type="entry name" value="SAP"/>
    <property type="match status" value="1"/>
</dbReference>
<dbReference type="Pfam" id="PF00622">
    <property type="entry name" value="SPRY"/>
    <property type="match status" value="1"/>
</dbReference>
<dbReference type="PRINTS" id="PR01217">
    <property type="entry name" value="PRICHEXTENSN"/>
</dbReference>
<dbReference type="SMART" id="SM00513">
    <property type="entry name" value="SAP"/>
    <property type="match status" value="1"/>
</dbReference>
<dbReference type="SMART" id="SM00449">
    <property type="entry name" value="SPRY"/>
    <property type="match status" value="1"/>
</dbReference>
<dbReference type="SUPFAM" id="SSF49899">
    <property type="entry name" value="Concanavalin A-like lectins/glucanases"/>
    <property type="match status" value="1"/>
</dbReference>
<dbReference type="SUPFAM" id="SSF52540">
    <property type="entry name" value="P-loop containing nucleoside triphosphate hydrolases"/>
    <property type="match status" value="1"/>
</dbReference>
<dbReference type="SUPFAM" id="SSF68906">
    <property type="entry name" value="SAP domain"/>
    <property type="match status" value="1"/>
</dbReference>
<dbReference type="PROSITE" id="PS50188">
    <property type="entry name" value="B302_SPRY"/>
    <property type="match status" value="1"/>
</dbReference>
<dbReference type="PROSITE" id="PS50800">
    <property type="entry name" value="SAP"/>
    <property type="match status" value="1"/>
</dbReference>
<organism>
    <name type="scientific">Mus musculus</name>
    <name type="common">Mouse</name>
    <dbReference type="NCBI Taxonomy" id="10090"/>
    <lineage>
        <taxon>Eukaryota</taxon>
        <taxon>Metazoa</taxon>
        <taxon>Chordata</taxon>
        <taxon>Craniata</taxon>
        <taxon>Vertebrata</taxon>
        <taxon>Euteleostomi</taxon>
        <taxon>Mammalia</taxon>
        <taxon>Eutheria</taxon>
        <taxon>Euarchontoglires</taxon>
        <taxon>Glires</taxon>
        <taxon>Rodentia</taxon>
        <taxon>Myomorpha</taxon>
        <taxon>Muroidea</taxon>
        <taxon>Muridae</taxon>
        <taxon>Murinae</taxon>
        <taxon>Mus</taxon>
        <taxon>Mus</taxon>
    </lineage>
</organism>
<evidence type="ECO:0000250" key="1"/>
<evidence type="ECO:0000250" key="2">
    <source>
        <dbReference type="UniProtKB" id="Q9BUJ2"/>
    </source>
</evidence>
<evidence type="ECO:0000255" key="3">
    <source>
        <dbReference type="PROSITE-ProRule" id="PRU00186"/>
    </source>
</evidence>
<evidence type="ECO:0000255" key="4">
    <source>
        <dbReference type="PROSITE-ProRule" id="PRU00548"/>
    </source>
</evidence>
<evidence type="ECO:0000256" key="5">
    <source>
        <dbReference type="SAM" id="MobiDB-lite"/>
    </source>
</evidence>
<evidence type="ECO:0000303" key="6">
    <source>
    </source>
</evidence>
<evidence type="ECO:0000303" key="7">
    <source>
    </source>
</evidence>
<evidence type="ECO:0000305" key="8"/>
<evidence type="ECO:0007744" key="9">
    <source>
    </source>
</evidence>
<evidence type="ECO:0007744" key="10">
    <source>
    </source>
</evidence>
<evidence type="ECO:0007744" key="11">
    <source>
    </source>
</evidence>
<evidence type="ECO:0007744" key="12">
    <source>
    </source>
</evidence>
<feature type="chain" id="PRO_0000227556" description="Heterogeneous nuclear ribonucleoprotein U-like protein 1">
    <location>
        <begin position="1"/>
        <end position="859"/>
    </location>
</feature>
<feature type="domain" description="SAP" evidence="3">
    <location>
        <begin position="3"/>
        <end position="37"/>
    </location>
</feature>
<feature type="domain" description="B30.2/SPRY" evidence="4">
    <location>
        <begin position="192"/>
        <end position="389"/>
    </location>
</feature>
<feature type="repeat" description="1-1">
    <location>
        <begin position="613"/>
        <end position="615"/>
    </location>
</feature>
<feature type="repeat" description="1-2">
    <location>
        <begin position="620"/>
        <end position="622"/>
    </location>
</feature>
<feature type="repeat" description="1-3">
    <location>
        <begin position="639"/>
        <end position="641"/>
    </location>
</feature>
<feature type="repeat" description="1-4">
    <location>
        <begin position="645"/>
        <end position="647"/>
    </location>
</feature>
<feature type="repeat" description="1-5">
    <location>
        <begin position="659"/>
        <end position="661"/>
    </location>
</feature>
<feature type="region of interest" description="Necessary for interaction with HRMT1L1" evidence="1">
    <location>
        <begin position="1"/>
        <end position="103"/>
    </location>
</feature>
<feature type="region of interest" description="Disordered" evidence="5">
    <location>
        <begin position="36"/>
        <end position="131"/>
    </location>
</feature>
<feature type="region of interest" description="Disordered" evidence="5">
    <location>
        <begin position="146"/>
        <end position="206"/>
    </location>
</feature>
<feature type="region of interest" description="Necessary for interaction with TP53" evidence="1">
    <location>
        <begin position="214"/>
        <end position="859"/>
    </location>
</feature>
<feature type="region of interest" description="Necessary for interaction with BRD7 and transcriptional activation" evidence="1">
    <location>
        <begin position="457"/>
        <end position="595"/>
    </location>
</feature>
<feature type="region of interest" description="Disordered" evidence="5">
    <location>
        <begin position="595"/>
        <end position="814"/>
    </location>
</feature>
<feature type="region of interest" description="5 X 3 AA repeats of R-G-G">
    <location>
        <begin position="613"/>
        <end position="661"/>
    </location>
</feature>
<feature type="region of interest" description="Necessary for transcription repression" evidence="1">
    <location>
        <begin position="613"/>
        <end position="661"/>
    </location>
</feature>
<feature type="compositionally biased region" description="Acidic residues" evidence="5">
    <location>
        <begin position="38"/>
        <end position="54"/>
    </location>
</feature>
<feature type="compositionally biased region" description="Pro residues" evidence="5">
    <location>
        <begin position="77"/>
        <end position="88"/>
    </location>
</feature>
<feature type="compositionally biased region" description="Basic and acidic residues" evidence="5">
    <location>
        <begin position="118"/>
        <end position="130"/>
    </location>
</feature>
<feature type="compositionally biased region" description="Basic and acidic residues" evidence="5">
    <location>
        <begin position="174"/>
        <end position="193"/>
    </location>
</feature>
<feature type="compositionally biased region" description="Basic and acidic residues" evidence="5">
    <location>
        <begin position="595"/>
        <end position="612"/>
    </location>
</feature>
<feature type="compositionally biased region" description="Gly residues" evidence="5">
    <location>
        <begin position="613"/>
        <end position="626"/>
    </location>
</feature>
<feature type="compositionally biased region" description="Gly residues" evidence="5">
    <location>
        <begin position="634"/>
        <end position="670"/>
    </location>
</feature>
<feature type="compositionally biased region" description="Low complexity" evidence="5">
    <location>
        <begin position="671"/>
        <end position="696"/>
    </location>
</feature>
<feature type="compositionally biased region" description="Pro residues" evidence="5">
    <location>
        <begin position="697"/>
        <end position="720"/>
    </location>
</feature>
<feature type="compositionally biased region" description="Polar residues" evidence="5">
    <location>
        <begin position="728"/>
        <end position="744"/>
    </location>
</feature>
<feature type="compositionally biased region" description="Low complexity" evidence="5">
    <location>
        <begin position="745"/>
        <end position="775"/>
    </location>
</feature>
<feature type="compositionally biased region" description="Pro residues" evidence="5">
    <location>
        <begin position="776"/>
        <end position="786"/>
    </location>
</feature>
<feature type="compositionally biased region" description="Pro residues" evidence="5">
    <location>
        <begin position="796"/>
        <end position="807"/>
    </location>
</feature>
<feature type="modified residue" description="Phosphoserine" evidence="9 10 11">
    <location>
        <position position="195"/>
    </location>
</feature>
<feature type="modified residue" description="Phosphothreonine" evidence="11">
    <location>
        <position position="210"/>
    </location>
</feature>
<feature type="modified residue" description="Phosphoserine" evidence="2">
    <location>
        <position position="513"/>
    </location>
</feature>
<feature type="modified residue" description="Asymmetric dimethylarginine" evidence="12">
    <location>
        <position position="639"/>
    </location>
</feature>
<feature type="modified residue" description="Asymmetric dimethylarginine; alternate" evidence="12">
    <location>
        <position position="645"/>
    </location>
</feature>
<feature type="modified residue" description="Omega-N-methylarginine; alternate" evidence="12">
    <location>
        <position position="645"/>
    </location>
</feature>
<feature type="modified residue" description="Asymmetric dimethylarginine; alternate" evidence="12">
    <location>
        <position position="659"/>
    </location>
</feature>
<feature type="modified residue" description="Omega-N-methylarginine; alternate" evidence="12">
    <location>
        <position position="659"/>
    </location>
</feature>
<feature type="modified residue" description="Omega-N-methylarginine" evidence="12">
    <location>
        <position position="664"/>
    </location>
</feature>
<feature type="modified residue" description="Omega-N-methylarginine" evidence="2">
    <location>
        <position position="674"/>
    </location>
</feature>
<feature type="modified residue" description="Phosphoserine" evidence="2">
    <location>
        <position position="721"/>
    </location>
</feature>
<feature type="cross-link" description="Glycyl lysine isopeptide (Lys-Gly) (interchain with G-Cter in SUMO1); alternate" evidence="2">
    <location>
        <position position="117"/>
    </location>
</feature>
<feature type="cross-link" description="Glycyl lysine isopeptide (Lys-Gly) (interchain with G-Cter in SUMO2); alternate" evidence="2">
    <location>
        <position position="117"/>
    </location>
</feature>
<feature type="cross-link" description="Glycyl lysine isopeptide (Lys-Gly) (interchain with G-Cter in SUMO1); alternate" evidence="2">
    <location>
        <position position="143"/>
    </location>
</feature>
<feature type="cross-link" description="Glycyl lysine isopeptide (Lys-Gly) (interchain with G-Cter in SUMO2); alternate" evidence="2">
    <location>
        <position position="143"/>
    </location>
</feature>
<feature type="cross-link" description="Glycyl lysine isopeptide (Lys-Gly) (interchain with G-Cter in SUMO2)" evidence="2">
    <location>
        <position position="147"/>
    </location>
</feature>
<feature type="cross-link" description="Glycyl lysine isopeptide (Lys-Gly) (interchain with G-Cter in SUMO2)" evidence="2">
    <location>
        <position position="163"/>
    </location>
</feature>
<feature type="cross-link" description="Glycyl lysine isopeptide (Lys-Gly) (interchain with G-Cter in SUMO2)" evidence="2">
    <location>
        <position position="271"/>
    </location>
</feature>
<feature type="cross-link" description="Glycyl lysine isopeptide (Lys-Gly) (interchain with G-Cter in SUMO2)" evidence="2">
    <location>
        <position position="450"/>
    </location>
</feature>
<feature type="cross-link" description="Glycyl lysine isopeptide (Lys-Gly) (interchain with G-Cter in SUMO2)" evidence="2">
    <location>
        <position position="540"/>
    </location>
</feature>
<feature type="splice variant" id="VSP_017553" description="In isoform 2." evidence="6">
    <location>
        <begin position="1"/>
        <end position="100"/>
    </location>
</feature>
<feature type="splice variant" id="VSP_017554" description="In isoform 3." evidence="7">
    <original>DFECGN</original>
    <variation>VLELQV</variation>
    <location>
        <begin position="335"/>
        <end position="340"/>
    </location>
</feature>
<feature type="splice variant" id="VSP_017555" description="In isoform 3." evidence="7">
    <location>
        <begin position="341"/>
        <end position="859"/>
    </location>
</feature>
<feature type="sequence conflict" description="In Ref. 1; BAE33342." evidence="8" ref="1">
    <original>N</original>
    <variation>Y</variation>
    <location>
        <position position="657"/>
    </location>
</feature>
<feature type="sequence conflict" description="In Ref. 1; BAE33342." evidence="8" ref="1">
    <original>S</original>
    <variation>T</variation>
    <location>
        <position position="665"/>
    </location>
</feature>
<feature type="sequence conflict" description="In Ref. 1; BAE33342." evidence="8" ref="1">
    <original>Q</original>
    <variation>L</variation>
    <location>
        <position position="672"/>
    </location>
</feature>
<feature type="sequence conflict" description="In Ref. 1; BAE33342." evidence="8" ref="1">
    <original>N</original>
    <variation>Y</variation>
    <location>
        <position position="686"/>
    </location>
</feature>
<gene>
    <name type="primary">Hnrnpul1</name>
    <name type="synonym">Hnrpul1</name>
</gene>
<reference key="1">
    <citation type="journal article" date="2005" name="Science">
        <title>The transcriptional landscape of the mammalian genome.</title>
        <authorList>
            <person name="Carninci P."/>
            <person name="Kasukawa T."/>
            <person name="Katayama S."/>
            <person name="Gough J."/>
            <person name="Frith M.C."/>
            <person name="Maeda N."/>
            <person name="Oyama R."/>
            <person name="Ravasi T."/>
            <person name="Lenhard B."/>
            <person name="Wells C."/>
            <person name="Kodzius R."/>
            <person name="Shimokawa K."/>
            <person name="Bajic V.B."/>
            <person name="Brenner S.E."/>
            <person name="Batalov S."/>
            <person name="Forrest A.R."/>
            <person name="Zavolan M."/>
            <person name="Davis M.J."/>
            <person name="Wilming L.G."/>
            <person name="Aidinis V."/>
            <person name="Allen J.E."/>
            <person name="Ambesi-Impiombato A."/>
            <person name="Apweiler R."/>
            <person name="Aturaliya R.N."/>
            <person name="Bailey T.L."/>
            <person name="Bansal M."/>
            <person name="Baxter L."/>
            <person name="Beisel K.W."/>
            <person name="Bersano T."/>
            <person name="Bono H."/>
            <person name="Chalk A.M."/>
            <person name="Chiu K.P."/>
            <person name="Choudhary V."/>
            <person name="Christoffels A."/>
            <person name="Clutterbuck D.R."/>
            <person name="Crowe M.L."/>
            <person name="Dalla E."/>
            <person name="Dalrymple B.P."/>
            <person name="de Bono B."/>
            <person name="Della Gatta G."/>
            <person name="di Bernardo D."/>
            <person name="Down T."/>
            <person name="Engstrom P."/>
            <person name="Fagiolini M."/>
            <person name="Faulkner G."/>
            <person name="Fletcher C.F."/>
            <person name="Fukushima T."/>
            <person name="Furuno M."/>
            <person name="Futaki S."/>
            <person name="Gariboldi M."/>
            <person name="Georgii-Hemming P."/>
            <person name="Gingeras T.R."/>
            <person name="Gojobori T."/>
            <person name="Green R.E."/>
            <person name="Gustincich S."/>
            <person name="Harbers M."/>
            <person name="Hayashi Y."/>
            <person name="Hensch T.K."/>
            <person name="Hirokawa N."/>
            <person name="Hill D."/>
            <person name="Huminiecki L."/>
            <person name="Iacono M."/>
            <person name="Ikeo K."/>
            <person name="Iwama A."/>
            <person name="Ishikawa T."/>
            <person name="Jakt M."/>
            <person name="Kanapin A."/>
            <person name="Katoh M."/>
            <person name="Kawasawa Y."/>
            <person name="Kelso J."/>
            <person name="Kitamura H."/>
            <person name="Kitano H."/>
            <person name="Kollias G."/>
            <person name="Krishnan S.P."/>
            <person name="Kruger A."/>
            <person name="Kummerfeld S.K."/>
            <person name="Kurochkin I.V."/>
            <person name="Lareau L.F."/>
            <person name="Lazarevic D."/>
            <person name="Lipovich L."/>
            <person name="Liu J."/>
            <person name="Liuni S."/>
            <person name="McWilliam S."/>
            <person name="Madan Babu M."/>
            <person name="Madera M."/>
            <person name="Marchionni L."/>
            <person name="Matsuda H."/>
            <person name="Matsuzawa S."/>
            <person name="Miki H."/>
            <person name="Mignone F."/>
            <person name="Miyake S."/>
            <person name="Morris K."/>
            <person name="Mottagui-Tabar S."/>
            <person name="Mulder N."/>
            <person name="Nakano N."/>
            <person name="Nakauchi H."/>
            <person name="Ng P."/>
            <person name="Nilsson R."/>
            <person name="Nishiguchi S."/>
            <person name="Nishikawa S."/>
            <person name="Nori F."/>
            <person name="Ohara O."/>
            <person name="Okazaki Y."/>
            <person name="Orlando V."/>
            <person name="Pang K.C."/>
            <person name="Pavan W.J."/>
            <person name="Pavesi G."/>
            <person name="Pesole G."/>
            <person name="Petrovsky N."/>
            <person name="Piazza S."/>
            <person name="Reed J."/>
            <person name="Reid J.F."/>
            <person name="Ring B.Z."/>
            <person name="Ringwald M."/>
            <person name="Rost B."/>
            <person name="Ruan Y."/>
            <person name="Salzberg S.L."/>
            <person name="Sandelin A."/>
            <person name="Schneider C."/>
            <person name="Schoenbach C."/>
            <person name="Sekiguchi K."/>
            <person name="Semple C.A."/>
            <person name="Seno S."/>
            <person name="Sessa L."/>
            <person name="Sheng Y."/>
            <person name="Shibata Y."/>
            <person name="Shimada H."/>
            <person name="Shimada K."/>
            <person name="Silva D."/>
            <person name="Sinclair B."/>
            <person name="Sperling S."/>
            <person name="Stupka E."/>
            <person name="Sugiura K."/>
            <person name="Sultana R."/>
            <person name="Takenaka Y."/>
            <person name="Taki K."/>
            <person name="Tammoja K."/>
            <person name="Tan S.L."/>
            <person name="Tang S."/>
            <person name="Taylor M.S."/>
            <person name="Tegner J."/>
            <person name="Teichmann S.A."/>
            <person name="Ueda H.R."/>
            <person name="van Nimwegen E."/>
            <person name="Verardo R."/>
            <person name="Wei C.L."/>
            <person name="Yagi K."/>
            <person name="Yamanishi H."/>
            <person name="Zabarovsky E."/>
            <person name="Zhu S."/>
            <person name="Zimmer A."/>
            <person name="Hide W."/>
            <person name="Bult C."/>
            <person name="Grimmond S.M."/>
            <person name="Teasdale R.D."/>
            <person name="Liu E.T."/>
            <person name="Brusic V."/>
            <person name="Quackenbush J."/>
            <person name="Wahlestedt C."/>
            <person name="Mattick J.S."/>
            <person name="Hume D.A."/>
            <person name="Kai C."/>
            <person name="Sasaki D."/>
            <person name="Tomaru Y."/>
            <person name="Fukuda S."/>
            <person name="Kanamori-Katayama M."/>
            <person name="Suzuki M."/>
            <person name="Aoki J."/>
            <person name="Arakawa T."/>
            <person name="Iida J."/>
            <person name="Imamura K."/>
            <person name="Itoh M."/>
            <person name="Kato T."/>
            <person name="Kawaji H."/>
            <person name="Kawagashira N."/>
            <person name="Kawashima T."/>
            <person name="Kojima M."/>
            <person name="Kondo S."/>
            <person name="Konno H."/>
            <person name="Nakano K."/>
            <person name="Ninomiya N."/>
            <person name="Nishio T."/>
            <person name="Okada M."/>
            <person name="Plessy C."/>
            <person name="Shibata K."/>
            <person name="Shiraki T."/>
            <person name="Suzuki S."/>
            <person name="Tagami M."/>
            <person name="Waki K."/>
            <person name="Watahiki A."/>
            <person name="Okamura-Oho Y."/>
            <person name="Suzuki H."/>
            <person name="Kawai J."/>
            <person name="Hayashizaki Y."/>
        </authorList>
    </citation>
    <scope>NUCLEOTIDE SEQUENCE [LARGE SCALE MRNA] (ISOFORMS 1 AND 3)</scope>
    <source>
        <strain>C57BL/6J</strain>
        <tissue>Spleen</tissue>
        <tissue>Thymus</tissue>
    </source>
</reference>
<reference key="2">
    <citation type="journal article" date="2004" name="Genome Res.">
        <title>The status, quality, and expansion of the NIH full-length cDNA project: the Mammalian Gene Collection (MGC).</title>
        <authorList>
            <consortium name="The MGC Project Team"/>
        </authorList>
    </citation>
    <scope>NUCLEOTIDE SEQUENCE [LARGE SCALE MRNA] (ISOFORMS 1 AND 2)</scope>
    <source>
        <strain>FVB/N</strain>
        <tissue>Embryo</tissue>
        <tissue>Mammary tumor</tissue>
    </source>
</reference>
<reference key="3">
    <citation type="journal article" date="2007" name="Proc. Natl. Acad. Sci. U.S.A.">
        <title>Large-scale phosphorylation analysis of mouse liver.</title>
        <authorList>
            <person name="Villen J."/>
            <person name="Beausoleil S.A."/>
            <person name="Gerber S.A."/>
            <person name="Gygi S.P."/>
        </authorList>
    </citation>
    <scope>PHOSPHORYLATION [LARGE SCALE ANALYSIS] AT SER-195</scope>
    <scope>IDENTIFICATION BY MASS SPECTROMETRY [LARGE SCALE ANALYSIS]</scope>
    <source>
        <tissue>Liver</tissue>
    </source>
</reference>
<reference key="4">
    <citation type="journal article" date="2009" name="Immunity">
        <title>The phagosomal proteome in interferon-gamma-activated macrophages.</title>
        <authorList>
            <person name="Trost M."/>
            <person name="English L."/>
            <person name="Lemieux S."/>
            <person name="Courcelles M."/>
            <person name="Desjardins M."/>
            <person name="Thibault P."/>
        </authorList>
    </citation>
    <scope>PHOSPHORYLATION [LARGE SCALE ANALYSIS] AT SER-195</scope>
    <scope>IDENTIFICATION BY MASS SPECTROMETRY [LARGE SCALE ANALYSIS]</scope>
</reference>
<reference key="5">
    <citation type="journal article" date="2009" name="Mol. Cell. Proteomics">
        <title>Large scale localization of protein phosphorylation by use of electron capture dissociation mass spectrometry.</title>
        <authorList>
            <person name="Sweet S.M."/>
            <person name="Bailey C.M."/>
            <person name="Cunningham D.L."/>
            <person name="Heath J.K."/>
            <person name="Cooper H.J."/>
        </authorList>
    </citation>
    <scope>IDENTIFICATION BY MASS SPECTROMETRY [LARGE SCALE ANALYSIS]</scope>
    <source>
        <tissue>Embryonic fibroblast</tissue>
    </source>
</reference>
<reference key="6">
    <citation type="journal article" date="2010" name="Cell">
        <title>A tissue-specific atlas of mouse protein phosphorylation and expression.</title>
        <authorList>
            <person name="Huttlin E.L."/>
            <person name="Jedrychowski M.P."/>
            <person name="Elias J.E."/>
            <person name="Goswami T."/>
            <person name="Rad R."/>
            <person name="Beausoleil S.A."/>
            <person name="Villen J."/>
            <person name="Haas W."/>
            <person name="Sowa M.E."/>
            <person name="Gygi S.P."/>
        </authorList>
    </citation>
    <scope>PHOSPHORYLATION [LARGE SCALE ANALYSIS] AT SER-195 AND THR-210</scope>
    <scope>IDENTIFICATION BY MASS SPECTROMETRY [LARGE SCALE ANALYSIS]</scope>
    <source>
        <tissue>Brain</tissue>
        <tissue>Brown adipose tissue</tissue>
        <tissue>Heart</tissue>
        <tissue>Kidney</tissue>
        <tissue>Liver</tissue>
        <tissue>Lung</tissue>
        <tissue>Pancreas</tissue>
        <tissue>Spleen</tissue>
        <tissue>Testis</tissue>
    </source>
</reference>
<reference key="7">
    <citation type="journal article" date="2014" name="Mol. Cell. Proteomics">
        <title>Immunoaffinity enrichment and mass spectrometry analysis of protein methylation.</title>
        <authorList>
            <person name="Guo A."/>
            <person name="Gu H."/>
            <person name="Zhou J."/>
            <person name="Mulhern D."/>
            <person name="Wang Y."/>
            <person name="Lee K.A."/>
            <person name="Yang V."/>
            <person name="Aguiar M."/>
            <person name="Kornhauser J."/>
            <person name="Jia X."/>
            <person name="Ren J."/>
            <person name="Beausoleil S.A."/>
            <person name="Silva J.C."/>
            <person name="Vemulapalli V."/>
            <person name="Bedford M.T."/>
            <person name="Comb M.J."/>
        </authorList>
    </citation>
    <scope>METHYLATION [LARGE SCALE ANALYSIS] AT ARG-639; ARG-645; ARG-659 AND ARG-664</scope>
    <scope>IDENTIFICATION BY MASS SPECTROMETRY [LARGE SCALE ANALYSIS]</scope>
    <source>
        <tissue>Brain</tissue>
        <tissue>Embryo</tissue>
    </source>
</reference>
<keyword id="KW-0010">Activator</keyword>
<keyword id="KW-0025">Alternative splicing</keyword>
<keyword id="KW-1017">Isopeptide bond</keyword>
<keyword id="KW-0488">Methylation</keyword>
<keyword id="KW-0539">Nucleus</keyword>
<keyword id="KW-0597">Phosphoprotein</keyword>
<keyword id="KW-1185">Reference proteome</keyword>
<keyword id="KW-0677">Repeat</keyword>
<keyword id="KW-0678">Repressor</keyword>
<keyword id="KW-0687">Ribonucleoprotein</keyword>
<keyword id="KW-0694">RNA-binding</keyword>
<keyword id="KW-0804">Transcription</keyword>
<keyword id="KW-0805">Transcription regulation</keyword>
<keyword id="KW-0832">Ubl conjugation</keyword>
<protein>
    <recommendedName>
        <fullName>Heterogeneous nuclear ribonucleoprotein U-like protein 1</fullName>
    </recommendedName>
</protein>